<keyword id="KW-0938">Abscisic acid signaling pathway</keyword>
<keyword id="KW-0025">Alternative splicing</keyword>
<keyword id="KW-0227">DNA damage</keyword>
<keyword id="KW-0496">Mitochondrion</keyword>
<keyword id="KW-0507">mRNA processing</keyword>
<keyword id="KW-0508">mRNA splicing</keyword>
<keyword id="KW-1185">Reference proteome</keyword>
<keyword id="KW-0677">Repeat</keyword>
<keyword id="KW-0809">Transit peptide</keyword>
<gene>
    <name evidence="5" type="primary">RUG3</name>
    <name evidence="6" type="ordered locus">At5g60870</name>
    <name evidence="7" type="ORF">MAE1.11</name>
</gene>
<organism>
    <name type="scientific">Arabidopsis thaliana</name>
    <name type="common">Mouse-ear cress</name>
    <dbReference type="NCBI Taxonomy" id="3702"/>
    <lineage>
        <taxon>Eukaryota</taxon>
        <taxon>Viridiplantae</taxon>
        <taxon>Streptophyta</taxon>
        <taxon>Embryophyta</taxon>
        <taxon>Tracheophyta</taxon>
        <taxon>Spermatophyta</taxon>
        <taxon>Magnoliopsida</taxon>
        <taxon>eudicotyledons</taxon>
        <taxon>Gunneridae</taxon>
        <taxon>Pentapetalae</taxon>
        <taxon>rosids</taxon>
        <taxon>malvids</taxon>
        <taxon>Brassicales</taxon>
        <taxon>Brassicaceae</taxon>
        <taxon>Camelineae</taxon>
        <taxon>Arabidopsis</taxon>
    </lineage>
</organism>
<proteinExistence type="evidence at protein level"/>
<name>RUG3_ARATH</name>
<protein>
    <recommendedName>
        <fullName evidence="5">RCC1 domain-containing protein RUG3, mitochondrial</fullName>
    </recommendedName>
    <alternativeName>
        <fullName evidence="5">RCC1/UVR8/GEF-like protein 3, mitochondrial</fullName>
    </alternativeName>
</protein>
<accession>Q9FJG9</accession>
<accession>B3LF49</accession>
<accession>F4K0I4</accession>
<accession>Q56Y67</accession>
<reference key="1">
    <citation type="journal article" date="1998" name="DNA Res.">
        <title>Structural analysis of Arabidopsis thaliana chromosome 5. VII. Sequence features of the regions of 1,013,767 bp covered by sixteen physically assigned P1 and TAC clones.</title>
        <authorList>
            <person name="Nakamura Y."/>
            <person name="Sato S."/>
            <person name="Asamizu E."/>
            <person name="Kaneko T."/>
            <person name="Kotani H."/>
            <person name="Miyajima N."/>
            <person name="Tabata S."/>
        </authorList>
    </citation>
    <scope>NUCLEOTIDE SEQUENCE [LARGE SCALE GENOMIC DNA]</scope>
    <source>
        <strain>cv. Columbia</strain>
    </source>
</reference>
<reference key="2">
    <citation type="journal article" date="2017" name="Plant J.">
        <title>Araport11: a complete reannotation of the Arabidopsis thaliana reference genome.</title>
        <authorList>
            <person name="Cheng C.Y."/>
            <person name="Krishnakumar V."/>
            <person name="Chan A.P."/>
            <person name="Thibaud-Nissen F."/>
            <person name="Schobel S."/>
            <person name="Town C.D."/>
        </authorList>
    </citation>
    <scope>GENOME REANNOTATION</scope>
    <source>
        <strain>cv. Columbia</strain>
    </source>
</reference>
<reference key="3">
    <citation type="submission" date="2005-03" db="EMBL/GenBank/DDBJ databases">
        <title>Large-scale analysis of RIKEN Arabidopsis full-length (RAFL) cDNAs.</title>
        <authorList>
            <person name="Totoki Y."/>
            <person name="Seki M."/>
            <person name="Ishida J."/>
            <person name="Nakajima M."/>
            <person name="Enju A."/>
            <person name="Kamiya A."/>
            <person name="Narusaka M."/>
            <person name="Shin-i T."/>
            <person name="Nakagawa M."/>
            <person name="Sakamoto N."/>
            <person name="Oishi K."/>
            <person name="Kohara Y."/>
            <person name="Kobayashi M."/>
            <person name="Toyoda A."/>
            <person name="Sakaki Y."/>
            <person name="Sakurai T."/>
            <person name="Iida K."/>
            <person name="Akiyama K."/>
            <person name="Satou M."/>
            <person name="Toyoda T."/>
            <person name="Konagaya A."/>
            <person name="Carninci P."/>
            <person name="Kawai J."/>
            <person name="Hayashizaki Y."/>
            <person name="Shinozaki K."/>
        </authorList>
    </citation>
    <scope>NUCLEOTIDE SEQUENCE [LARGE SCALE MRNA] (ISOFORM 2)</scope>
    <source>
        <strain>cv. Columbia</strain>
    </source>
</reference>
<reference key="4">
    <citation type="submission" date="2008-06" db="EMBL/GenBank/DDBJ databases">
        <title>Arabidopsis ORF clones.</title>
        <authorList>
            <person name="de los Reyes C."/>
            <person name="Quan R."/>
            <person name="Chen H."/>
            <person name="Bautista V."/>
            <person name="Kim C.J."/>
            <person name="Ecker J.R."/>
        </authorList>
    </citation>
    <scope>NUCLEOTIDE SEQUENCE [LARGE SCALE MRNA] OF 70-445 (ISOFORM 1)</scope>
    <source>
        <strain>cv. Columbia</strain>
    </source>
</reference>
<reference key="5">
    <citation type="journal article" date="2011" name="Plant J.">
        <title>The RCC1 family protein RUG3 is required for splicing of nad2 and complex I biogenesis in mitochondria of Arabidopsis thaliana.</title>
        <authorList>
            <person name="Kuehn K."/>
            <person name="Carrie C."/>
            <person name="Giraud E."/>
            <person name="Wang Y."/>
            <person name="Meyer E.H."/>
            <person name="Narsai R."/>
            <person name="des Francs-Small C.C."/>
            <person name="Zhang B."/>
            <person name="Murcha M.W."/>
            <person name="Whelan J."/>
        </authorList>
    </citation>
    <scope>FUNCTION</scope>
    <scope>DISRUPTION PHENOTYPE</scope>
    <scope>SUBCELLULAR LOCATION</scope>
    <source>
        <strain>cv. Columbia</strain>
    </source>
</reference>
<reference key="6">
    <citation type="journal article" date="2017" name="Plant Signal. Behav.">
        <title>RUG3 is a negative regulator of plant responses to ABA in Arabidopsis thaliana.</title>
        <authorList>
            <person name="Su C."/>
            <person name="Yuan J."/>
            <person name="Zhao H."/>
            <person name="Zhao Y."/>
            <person name="Ji H."/>
            <person name="Wang Y."/>
            <person name="Li X."/>
        </authorList>
    </citation>
    <scope>FUNCTION</scope>
    <scope>DISRUPTION PHENOTYPE</scope>
</reference>
<reference key="7">
    <citation type="journal article" date="2017" name="Sci. Rep.">
        <title>RUG3 and ATM synergistically regulate the alternative splicing of mitochondrial nad2 and the DNA damage response in Arabidopsis thaliana.</title>
        <authorList>
            <person name="Su C."/>
            <person name="Zhao H."/>
            <person name="Zhao Y."/>
            <person name="Ji H."/>
            <person name="Wang Y."/>
            <person name="Zhi L."/>
            <person name="Li X."/>
        </authorList>
    </citation>
    <scope>FUNCTION</scope>
    <scope>DISRUPTION PHENOTYPE</scope>
    <scope>INTERACTION WITH ATM</scope>
    <scope>TISSUE SPECIFICITY</scope>
    <scope>REGULATION BY METHYL METHANESULFONATE</scope>
    <scope>SUBCELLULAR LOCATION</scope>
    <source>
        <strain>cv. Columbia</strain>
    </source>
</reference>
<dbReference type="EMBL" id="AB015472">
    <property type="protein sequence ID" value="BAB10107.1"/>
    <property type="molecule type" value="Genomic_DNA"/>
</dbReference>
<dbReference type="EMBL" id="CP002688">
    <property type="protein sequence ID" value="AED97388.1"/>
    <property type="molecule type" value="Genomic_DNA"/>
</dbReference>
<dbReference type="EMBL" id="CP002688">
    <property type="protein sequence ID" value="AED97389.2"/>
    <property type="molecule type" value="Genomic_DNA"/>
</dbReference>
<dbReference type="EMBL" id="CP002688">
    <property type="protein sequence ID" value="AED97390.1"/>
    <property type="molecule type" value="Genomic_DNA"/>
</dbReference>
<dbReference type="EMBL" id="AK221456">
    <property type="protein sequence ID" value="BAD94537.1"/>
    <property type="molecule type" value="mRNA"/>
</dbReference>
<dbReference type="EMBL" id="BT033037">
    <property type="protein sequence ID" value="ACE79739.1"/>
    <property type="molecule type" value="mRNA"/>
</dbReference>
<dbReference type="RefSeq" id="NP_001078775.1">
    <molecule id="Q9FJG9-2"/>
    <property type="nucleotide sequence ID" value="NM_001085306.1"/>
</dbReference>
<dbReference type="RefSeq" id="NP_200895.2">
    <molecule id="Q9FJG9-1"/>
    <property type="nucleotide sequence ID" value="NM_125480.4"/>
</dbReference>
<dbReference type="RefSeq" id="NP_974971.2">
    <molecule id="Q9FJG9-3"/>
    <property type="nucleotide sequence ID" value="NM_203242.2"/>
</dbReference>
<dbReference type="SMR" id="Q9FJG9"/>
<dbReference type="FunCoup" id="Q9FJG9">
    <property type="interactions" value="2088"/>
</dbReference>
<dbReference type="STRING" id="3702.Q9FJG9"/>
<dbReference type="iPTMnet" id="Q9FJG9"/>
<dbReference type="PaxDb" id="3702-AT5G60870.1"/>
<dbReference type="ProteomicsDB" id="228057">
    <molecule id="Q9FJG9-1"/>
</dbReference>
<dbReference type="EnsemblPlants" id="AT5G60870.1">
    <molecule id="Q9FJG9-1"/>
    <property type="protein sequence ID" value="AT5G60870.1"/>
    <property type="gene ID" value="AT5G60870"/>
</dbReference>
<dbReference type="EnsemblPlants" id="AT5G60870.2">
    <molecule id="Q9FJG9-3"/>
    <property type="protein sequence ID" value="AT5G60870.2"/>
    <property type="gene ID" value="AT5G60870"/>
</dbReference>
<dbReference type="EnsemblPlants" id="AT5G60870.3">
    <molecule id="Q9FJG9-2"/>
    <property type="protein sequence ID" value="AT5G60870.3"/>
    <property type="gene ID" value="AT5G60870"/>
</dbReference>
<dbReference type="GeneID" id="836208"/>
<dbReference type="Gramene" id="AT5G60870.1">
    <molecule id="Q9FJG9-1"/>
    <property type="protein sequence ID" value="AT5G60870.1"/>
    <property type="gene ID" value="AT5G60870"/>
</dbReference>
<dbReference type="Gramene" id="AT5G60870.2">
    <molecule id="Q9FJG9-3"/>
    <property type="protein sequence ID" value="AT5G60870.2"/>
    <property type="gene ID" value="AT5G60870"/>
</dbReference>
<dbReference type="Gramene" id="AT5G60870.3">
    <molecule id="Q9FJG9-2"/>
    <property type="protein sequence ID" value="AT5G60870.3"/>
    <property type="gene ID" value="AT5G60870"/>
</dbReference>
<dbReference type="KEGG" id="ath:AT5G60870"/>
<dbReference type="Araport" id="AT5G60870"/>
<dbReference type="TAIR" id="AT5G60870">
    <property type="gene designation" value="RUG3"/>
</dbReference>
<dbReference type="eggNOG" id="KOG1426">
    <property type="taxonomic scope" value="Eukaryota"/>
</dbReference>
<dbReference type="HOGENOM" id="CLU_030760_1_0_1"/>
<dbReference type="InParanoid" id="Q9FJG9"/>
<dbReference type="OMA" id="IWNWGAN"/>
<dbReference type="OrthoDB" id="239701at2759"/>
<dbReference type="PhylomeDB" id="Q9FJG9"/>
<dbReference type="PRO" id="PR:Q9FJG9"/>
<dbReference type="Proteomes" id="UP000006548">
    <property type="component" value="Chromosome 5"/>
</dbReference>
<dbReference type="ExpressionAtlas" id="Q9FJG9">
    <property type="expression patterns" value="baseline and differential"/>
</dbReference>
<dbReference type="GO" id="GO:0005739">
    <property type="term" value="C:mitochondrion"/>
    <property type="evidence" value="ECO:0000314"/>
    <property type="project" value="UniProtKB"/>
</dbReference>
<dbReference type="GO" id="GO:0009738">
    <property type="term" value="P:abscisic acid-activated signaling pathway"/>
    <property type="evidence" value="ECO:0007669"/>
    <property type="project" value="UniProtKB-KW"/>
</dbReference>
<dbReference type="GO" id="GO:0006974">
    <property type="term" value="P:DNA damage response"/>
    <property type="evidence" value="ECO:0000315"/>
    <property type="project" value="UniProtKB"/>
</dbReference>
<dbReference type="GO" id="GO:0032981">
    <property type="term" value="P:mitochondrial respiratory chain complex I assembly"/>
    <property type="evidence" value="ECO:0000315"/>
    <property type="project" value="TAIR"/>
</dbReference>
<dbReference type="GO" id="GO:0006397">
    <property type="term" value="P:mRNA processing"/>
    <property type="evidence" value="ECO:0007669"/>
    <property type="project" value="UniProtKB-KW"/>
</dbReference>
<dbReference type="GO" id="GO:0009788">
    <property type="term" value="P:negative regulation of abscisic acid-activated signaling pathway"/>
    <property type="evidence" value="ECO:0000315"/>
    <property type="project" value="UniProtKB"/>
</dbReference>
<dbReference type="GO" id="GO:0072702">
    <property type="term" value="P:response to methyl methanesulfonate"/>
    <property type="evidence" value="ECO:0000270"/>
    <property type="project" value="UniProtKB"/>
</dbReference>
<dbReference type="GO" id="GO:0008380">
    <property type="term" value="P:RNA splicing"/>
    <property type="evidence" value="ECO:0000315"/>
    <property type="project" value="UniProtKB"/>
</dbReference>
<dbReference type="GO" id="GO:0010228">
    <property type="term" value="P:vegetative to reproductive phase transition of meristem"/>
    <property type="evidence" value="ECO:0000315"/>
    <property type="project" value="UniProtKB"/>
</dbReference>
<dbReference type="FunFam" id="2.130.10.30:FF:000064">
    <property type="entry name" value="RCC1 domain-containing protein RUG3, mitochondrial"/>
    <property type="match status" value="1"/>
</dbReference>
<dbReference type="FunFam" id="2.130.10.30:FF:000067">
    <property type="entry name" value="RCC1 domain-containing protein RUG3, mitochondrial"/>
    <property type="match status" value="1"/>
</dbReference>
<dbReference type="Gene3D" id="2.130.10.30">
    <property type="entry name" value="Regulator of chromosome condensation 1/beta-lactamase-inhibitor protein II"/>
    <property type="match status" value="2"/>
</dbReference>
<dbReference type="InterPro" id="IPR009091">
    <property type="entry name" value="RCC1/BLIP-II"/>
</dbReference>
<dbReference type="InterPro" id="IPR000408">
    <property type="entry name" value="Reg_chr_condens"/>
</dbReference>
<dbReference type="InterPro" id="IPR051210">
    <property type="entry name" value="Ub_ligase/GEF_domain"/>
</dbReference>
<dbReference type="PANTHER" id="PTHR22870:SF408">
    <property type="entry name" value="OS09G0560450 PROTEIN"/>
    <property type="match status" value="1"/>
</dbReference>
<dbReference type="PANTHER" id="PTHR22870">
    <property type="entry name" value="REGULATOR OF CHROMOSOME CONDENSATION"/>
    <property type="match status" value="1"/>
</dbReference>
<dbReference type="Pfam" id="PF25390">
    <property type="entry name" value="WD40_RLD"/>
    <property type="match status" value="1"/>
</dbReference>
<dbReference type="PRINTS" id="PR00633">
    <property type="entry name" value="RCCNDNSATION"/>
</dbReference>
<dbReference type="SUPFAM" id="SSF50985">
    <property type="entry name" value="RCC1/BLIP-II"/>
    <property type="match status" value="1"/>
</dbReference>
<dbReference type="PROSITE" id="PS00626">
    <property type="entry name" value="RCC1_2"/>
    <property type="match status" value="1"/>
</dbReference>
<dbReference type="PROSITE" id="PS50012">
    <property type="entry name" value="RCC1_3"/>
    <property type="match status" value="6"/>
</dbReference>
<sequence>MAALSHRLRSFTRRFSSTRTTQRSGGGANTKVPILYTSPDIDSDPVTLQLFSWGRGASGQLGGGIEEIRMYPSPVANLLFRSDQSFSLAQTPGRIDADSSSFRIGISCGLFHSGLTIDGDLWIWGKGDGGRLGFGQENSVFVPNLNPLFEEHSIRCIALGGLHSVALTHQGDVFTWGYGGFGALGHKVYTRELVPRRVDDSWDCKISAIATSGTHTAAITESGELYMWGREEGDGRLGLGPGRGPNEGGGLSVPSKVKALTVPVASVSCGGFFTMALTKEGQLWNWGANSNYELGRGDNLGGWEPMPVPSLEGVRITQIACGGYHSLALTEEGKVLSWGHGGHGQLGSSSLRNQKVPTEIEALADKKIVFIASGGSSSAAITDGGELWMWGNAKDFQLGVPGLPEIQTTPVEVNFLTEEDECQPHKVISISIGASHALCLVSRSP</sequence>
<feature type="transit peptide" description="Mitochondrion" evidence="1">
    <location>
        <begin position="1"/>
        <end position="22"/>
    </location>
</feature>
<feature type="chain" id="PRO_0000445001" description="RCC1 domain-containing protein RUG3, mitochondrial">
    <location>
        <begin position="23"/>
        <end position="445"/>
    </location>
</feature>
<feature type="repeat" description="RCC1 1" evidence="1">
    <location>
        <begin position="47"/>
        <end position="101"/>
    </location>
</feature>
<feature type="repeat" description="RCC1 2" evidence="1">
    <location>
        <begin position="118"/>
        <end position="169"/>
    </location>
</feature>
<feature type="repeat" description="RCC1 3" evidence="1">
    <location>
        <begin position="171"/>
        <end position="221"/>
    </location>
</feature>
<feature type="repeat" description="RCC1 4" evidence="1">
    <location>
        <begin position="222"/>
        <end position="279"/>
    </location>
</feature>
<feature type="repeat" description="RCC1 5" evidence="1">
    <location>
        <begin position="280"/>
        <end position="331"/>
    </location>
</feature>
<feature type="repeat" description="RCC1 6" evidence="1">
    <location>
        <begin position="333"/>
        <end position="383"/>
    </location>
</feature>
<feature type="repeat" description="RCC1 7" evidence="1">
    <location>
        <begin position="385"/>
        <end position="442"/>
    </location>
</feature>
<feature type="splice variant" id="VSP_059685" description="In isoform 2.">
    <original>AALSHRLRSFTRRFSSTRTTQRSGGGANTKVPILYTSPDIDSDPVTLQLFSWGRGASGQLGGGIEEIRMYPSPVANLLFRSDQSFSLAQTPGRIDADSSSFRIGISCGLFHSGLTIDGDLWIWGKGDGGRLGFGQENSVFVPNLNPLFEEHSIRCIALGGLHSVALTHQGDVFTW</original>
    <variation>YSLVVR</variation>
    <location>
        <begin position="2"/>
        <end position="176"/>
    </location>
</feature>
<feature type="splice variant" id="VSP_059686" description="In isoform 3.">
    <original>I</original>
    <variation>ITGWDWFL</variation>
    <location>
        <position position="381"/>
    </location>
</feature>
<comment type="function">
    <text evidence="2 3 4">Regulates DNA damage response (DDR) synergistically with ATM (PubMed:28262819). Together with ATM, involved in the splicing of the ND2/NAD2 mRNA (PubMed:21623974, PubMed:28262819). Required for the accumulation of mitochondrial respiratory chain complex I (PubMed:21623974). Negative regulator of plant responses to abscisic acid (ABA) (PubMed:28613105). May have a pivotal role in vegetative growth and the phase transition from vegetative to reproductive growth (PubMed:28262819).</text>
</comment>
<comment type="subunit">
    <text evidence="3">Interacts with ATM.</text>
</comment>
<comment type="subcellular location">
    <subcellularLocation>
        <location evidence="2 3">Mitochondrion</location>
    </subcellularLocation>
</comment>
<comment type="alternative products">
    <event type="alternative splicing"/>
    <isoform>
        <id>Q9FJG9-1</id>
        <name>1</name>
        <sequence type="displayed"/>
    </isoform>
    <isoform>
        <id>Q9FJG9-2</id>
        <name>2</name>
        <sequence type="described" ref="VSP_059685"/>
    </isoform>
    <isoform>
        <id>Q9FJG9-3</id>
        <name>3</name>
        <sequence type="described" ref="VSP_059686"/>
    </isoform>
</comment>
<comment type="tissue specificity">
    <text evidence="3">Mostly expressed in roots and rosette leaves of young seedlings, and, to a lower extent, in the flowers and siliques of mature plants. Preferentially expressed in the vascular tissues.</text>
</comment>
<comment type="induction">
    <text evidence="3">Reduced by methyl methanesulfonate (MMS) treatment.</text>
</comment>
<comment type="disruption phenotype">
    <text evidence="2 3 4">Delayed development including late seed germination and cotyledon greening as well as delayed flowering time, short roots and mildly curled rosette leaves in long-day conditions, thus leading to extended life span (PubMed:21623974, PubMed:28262819). Reduced root length is associated with a smaller size of the root apical meristem (RAM) due to a decreased cortical cell number (PubMed:28262819). Reduced mitochondrial complex I abundance and activity. Lower levels of complex I subunits NAD9 and FRO1, but induced expression of the alternative oxidase (AOX) (PubMed:21623974). Reduced splicing efficiencies for both the trans-spliced intron 2 and the cis-spliced intron 3 of ND2/NAD2 mRNA (PubMed:21623974, PubMed:28262819). Increased capacities for import of nucleus-encoded mitochondrial proteins into the organelle and moderately increased mitochondrial transcript levels (PubMed:21623974). Increased plant responses to abscisic acid (ABA) during seed germination and post-germinative growth (PubMed:28613105). Augmented DNA damage response (DDR) associated with increased intracellular reactive oxygen species (ROS) levels and cell cycle arrest at the G2/M checkpoint in the root apical meristem (RAM), thus leading to root growth retardation (PubMed:28262819).</text>
</comment>
<evidence type="ECO:0000255" key="1"/>
<evidence type="ECO:0000269" key="2">
    <source>
    </source>
</evidence>
<evidence type="ECO:0000269" key="3">
    <source>
    </source>
</evidence>
<evidence type="ECO:0000269" key="4">
    <source>
    </source>
</evidence>
<evidence type="ECO:0000303" key="5">
    <source>
    </source>
</evidence>
<evidence type="ECO:0000312" key="6">
    <source>
        <dbReference type="Araport" id="AT5G60870"/>
    </source>
</evidence>
<evidence type="ECO:0000312" key="7">
    <source>
        <dbReference type="EMBL" id="BAB10107.1"/>
    </source>
</evidence>